<dbReference type="EMBL" id="CP000968">
    <property type="protein sequence ID" value="ACB08313.1"/>
    <property type="molecule type" value="Genomic_DNA"/>
</dbReference>
<dbReference type="RefSeq" id="WP_012310210.1">
    <property type="nucleotide sequence ID" value="NC_010482.1"/>
</dbReference>
<dbReference type="SMR" id="B1L784"/>
<dbReference type="FunCoup" id="B1L784">
    <property type="interactions" value="196"/>
</dbReference>
<dbReference type="STRING" id="374847.Kcr_1568"/>
<dbReference type="EnsemblBacteria" id="ACB08313">
    <property type="protein sequence ID" value="ACB08313"/>
    <property type="gene ID" value="Kcr_1568"/>
</dbReference>
<dbReference type="GeneID" id="6094844"/>
<dbReference type="KEGG" id="kcr:Kcr_1568"/>
<dbReference type="eggNOG" id="arCOG04089">
    <property type="taxonomic scope" value="Archaea"/>
</dbReference>
<dbReference type="HOGENOM" id="CLU_083919_1_1_2"/>
<dbReference type="InParanoid" id="B1L784"/>
<dbReference type="OrthoDB" id="11624at2157"/>
<dbReference type="Proteomes" id="UP000001686">
    <property type="component" value="Chromosome"/>
</dbReference>
<dbReference type="GO" id="GO:0022625">
    <property type="term" value="C:cytosolic large ribosomal subunit"/>
    <property type="evidence" value="ECO:0000318"/>
    <property type="project" value="GO_Central"/>
</dbReference>
<dbReference type="GO" id="GO:0070180">
    <property type="term" value="F:large ribosomal subunit rRNA binding"/>
    <property type="evidence" value="ECO:0007669"/>
    <property type="project" value="UniProtKB-UniRule"/>
</dbReference>
<dbReference type="GO" id="GO:0003723">
    <property type="term" value="F:RNA binding"/>
    <property type="evidence" value="ECO:0000318"/>
    <property type="project" value="GO_Central"/>
</dbReference>
<dbReference type="GO" id="GO:0003735">
    <property type="term" value="F:structural constituent of ribosome"/>
    <property type="evidence" value="ECO:0000318"/>
    <property type="project" value="GO_Central"/>
</dbReference>
<dbReference type="GO" id="GO:0006412">
    <property type="term" value="P:translation"/>
    <property type="evidence" value="ECO:0007669"/>
    <property type="project" value="UniProtKB-UniRule"/>
</dbReference>
<dbReference type="Gene3D" id="1.10.1200.240">
    <property type="match status" value="1"/>
</dbReference>
<dbReference type="Gene3D" id="1.10.1650.10">
    <property type="match status" value="1"/>
</dbReference>
<dbReference type="HAMAP" id="MF_01475">
    <property type="entry name" value="Ribosomal_eL19"/>
    <property type="match status" value="1"/>
</dbReference>
<dbReference type="InterPro" id="IPR035970">
    <property type="entry name" value="60S_ribosomal_eL19_sf"/>
</dbReference>
<dbReference type="InterPro" id="IPR039547">
    <property type="entry name" value="Ribosomal_eL19"/>
</dbReference>
<dbReference type="InterPro" id="IPR000196">
    <property type="entry name" value="Ribosomal_eL19_dom"/>
</dbReference>
<dbReference type="InterPro" id="IPR015972">
    <property type="entry name" value="Ribosomal_eL19_dom1"/>
</dbReference>
<dbReference type="NCBIfam" id="NF006343">
    <property type="entry name" value="PRK08570.1"/>
    <property type="match status" value="1"/>
</dbReference>
<dbReference type="PANTHER" id="PTHR10722">
    <property type="entry name" value="60S RIBOSOMAL PROTEIN L19"/>
    <property type="match status" value="1"/>
</dbReference>
<dbReference type="Pfam" id="PF01280">
    <property type="entry name" value="Ribosomal_L19e"/>
    <property type="match status" value="1"/>
</dbReference>
<dbReference type="Pfam" id="PF25476">
    <property type="entry name" value="Ribosomal_L19e_C"/>
    <property type="match status" value="1"/>
</dbReference>
<dbReference type="SMART" id="SM01416">
    <property type="entry name" value="Ribosomal_L19e"/>
    <property type="match status" value="1"/>
</dbReference>
<dbReference type="SUPFAM" id="SSF48140">
    <property type="entry name" value="Ribosomal protein L19 (L19e)"/>
    <property type="match status" value="1"/>
</dbReference>
<accession>B1L784</accession>
<organism>
    <name type="scientific">Korarchaeum cryptofilum (strain OPF8)</name>
    <dbReference type="NCBI Taxonomy" id="374847"/>
    <lineage>
        <taxon>Archaea</taxon>
        <taxon>Thermoproteota</taxon>
        <taxon>Candidatus Korarchaeia</taxon>
        <taxon>Candidatus Korarchaeales</taxon>
        <taxon>Candidatus Korarchaeaceae</taxon>
        <taxon>Candidatus Korarchaeum</taxon>
    </lineage>
</organism>
<evidence type="ECO:0000255" key="1">
    <source>
        <dbReference type="HAMAP-Rule" id="MF_01475"/>
    </source>
</evidence>
<evidence type="ECO:0000256" key="2">
    <source>
        <dbReference type="SAM" id="MobiDB-lite"/>
    </source>
</evidence>
<evidence type="ECO:0000305" key="3"/>
<keyword id="KW-1185">Reference proteome</keyword>
<keyword id="KW-0687">Ribonucleoprotein</keyword>
<keyword id="KW-0689">Ribosomal protein</keyword>
<keyword id="KW-0694">RNA-binding</keyword>
<keyword id="KW-0699">rRNA-binding</keyword>
<reference key="1">
    <citation type="journal article" date="2008" name="Proc. Natl. Acad. Sci. U.S.A.">
        <title>A korarchaeal genome reveals new insights into the evolution of the Archaea.</title>
        <authorList>
            <person name="Elkins J.G."/>
            <person name="Podar M."/>
            <person name="Graham D.E."/>
            <person name="Makarova K.S."/>
            <person name="Wolf Y."/>
            <person name="Randau L."/>
            <person name="Hedlund B.P."/>
            <person name="Brochier-Armanet C."/>
            <person name="Kunin V."/>
            <person name="Anderson I."/>
            <person name="Lapidus A."/>
            <person name="Goltsman E."/>
            <person name="Barry K."/>
            <person name="Koonin E.V."/>
            <person name="Hugenholtz P."/>
            <person name="Kyrpides N."/>
            <person name="Wanner G."/>
            <person name="Richardson P."/>
            <person name="Keller M."/>
            <person name="Stetter K.O."/>
        </authorList>
    </citation>
    <scope>NUCLEOTIDE SEQUENCE [LARGE SCALE GENOMIC DNA]</scope>
    <source>
        <strain>OPF8</strain>
    </source>
</reference>
<comment type="function">
    <text evidence="1">Binds to the 23S rRNA.</text>
</comment>
<comment type="subunit">
    <text evidence="1">Part of the 50S ribosomal subunit.</text>
</comment>
<comment type="similarity">
    <text evidence="1">Belongs to the eukaryotic ribosomal protein eL19 family.</text>
</comment>
<sequence>MDLEYQKKLAAKVAGVGLDRVRINPEKIDLVSEAVTRADIRRLIRSGAIEILQKRGISGARKKPRRKGPGSRKGGKYSKLPRKRRWIRKIRALRRELRRMKEQGLIDSKEYRELYAKLSSFNSVSQLRAHVGR</sequence>
<gene>
    <name evidence="1" type="primary">rpl19e</name>
    <name type="ordered locus">Kcr_1568</name>
</gene>
<feature type="chain" id="PRO_0000419044" description="Large ribosomal subunit protein eL19">
    <location>
        <begin position="1"/>
        <end position="133"/>
    </location>
</feature>
<feature type="region of interest" description="Disordered" evidence="2">
    <location>
        <begin position="55"/>
        <end position="83"/>
    </location>
</feature>
<feature type="compositionally biased region" description="Basic residues" evidence="2">
    <location>
        <begin position="60"/>
        <end position="83"/>
    </location>
</feature>
<name>RL19E_KORCO</name>
<proteinExistence type="inferred from homology"/>
<protein>
    <recommendedName>
        <fullName evidence="1">Large ribosomal subunit protein eL19</fullName>
    </recommendedName>
    <alternativeName>
        <fullName evidence="3">50S ribosomal protein L19e</fullName>
    </alternativeName>
</protein>